<accession>Q82K80</accession>
<gene>
    <name evidence="1" type="primary">pnp</name>
    <name type="ordered locus">SAV_2523</name>
</gene>
<organism>
    <name type="scientific">Streptomyces avermitilis (strain ATCC 31267 / DSM 46492 / JCM 5070 / NBRC 14893 / NCIMB 12804 / NRRL 8165 / MA-4680)</name>
    <dbReference type="NCBI Taxonomy" id="227882"/>
    <lineage>
        <taxon>Bacteria</taxon>
        <taxon>Bacillati</taxon>
        <taxon>Actinomycetota</taxon>
        <taxon>Actinomycetes</taxon>
        <taxon>Kitasatosporales</taxon>
        <taxon>Streptomycetaceae</taxon>
        <taxon>Streptomyces</taxon>
    </lineage>
</organism>
<dbReference type="EC" id="2.7.7.8" evidence="1"/>
<dbReference type="EMBL" id="BA000030">
    <property type="protein sequence ID" value="BAC70234.1"/>
    <property type="molecule type" value="Genomic_DNA"/>
</dbReference>
<dbReference type="RefSeq" id="WP_010983960.1">
    <property type="nucleotide sequence ID" value="NZ_JZJK01000064.1"/>
</dbReference>
<dbReference type="SMR" id="Q82K80"/>
<dbReference type="GeneID" id="41539613"/>
<dbReference type="KEGG" id="sma:SAVERM_2523"/>
<dbReference type="eggNOG" id="COG1185">
    <property type="taxonomic scope" value="Bacteria"/>
</dbReference>
<dbReference type="HOGENOM" id="CLU_004217_2_2_11"/>
<dbReference type="OrthoDB" id="9804305at2"/>
<dbReference type="Proteomes" id="UP000000428">
    <property type="component" value="Chromosome"/>
</dbReference>
<dbReference type="GO" id="GO:0005829">
    <property type="term" value="C:cytosol"/>
    <property type="evidence" value="ECO:0007669"/>
    <property type="project" value="TreeGrafter"/>
</dbReference>
<dbReference type="GO" id="GO:0000175">
    <property type="term" value="F:3'-5'-RNA exonuclease activity"/>
    <property type="evidence" value="ECO:0007669"/>
    <property type="project" value="TreeGrafter"/>
</dbReference>
<dbReference type="GO" id="GO:0000287">
    <property type="term" value="F:magnesium ion binding"/>
    <property type="evidence" value="ECO:0007669"/>
    <property type="project" value="UniProtKB-UniRule"/>
</dbReference>
<dbReference type="GO" id="GO:0004654">
    <property type="term" value="F:polyribonucleotide nucleotidyltransferase activity"/>
    <property type="evidence" value="ECO:0007669"/>
    <property type="project" value="UniProtKB-UniRule"/>
</dbReference>
<dbReference type="GO" id="GO:0003723">
    <property type="term" value="F:RNA binding"/>
    <property type="evidence" value="ECO:0007669"/>
    <property type="project" value="UniProtKB-UniRule"/>
</dbReference>
<dbReference type="GO" id="GO:0006402">
    <property type="term" value="P:mRNA catabolic process"/>
    <property type="evidence" value="ECO:0007669"/>
    <property type="project" value="UniProtKB-UniRule"/>
</dbReference>
<dbReference type="GO" id="GO:0006396">
    <property type="term" value="P:RNA processing"/>
    <property type="evidence" value="ECO:0007669"/>
    <property type="project" value="InterPro"/>
</dbReference>
<dbReference type="CDD" id="cd02393">
    <property type="entry name" value="KH-I_PNPase"/>
    <property type="match status" value="1"/>
</dbReference>
<dbReference type="CDD" id="cd11364">
    <property type="entry name" value="RNase_PH_PNPase_2"/>
    <property type="match status" value="1"/>
</dbReference>
<dbReference type="CDD" id="cd04472">
    <property type="entry name" value="S1_PNPase"/>
    <property type="match status" value="1"/>
</dbReference>
<dbReference type="FunFam" id="2.40.50.140:FF:000069">
    <property type="entry name" value="Polyribonucleotide nucleotidyltransferase"/>
    <property type="match status" value="1"/>
</dbReference>
<dbReference type="FunFam" id="3.30.1370.10:FF:000001">
    <property type="entry name" value="Polyribonucleotide nucleotidyltransferase"/>
    <property type="match status" value="1"/>
</dbReference>
<dbReference type="FunFam" id="3.30.230.70:FF:000001">
    <property type="entry name" value="Polyribonucleotide nucleotidyltransferase"/>
    <property type="match status" value="1"/>
</dbReference>
<dbReference type="FunFam" id="3.30.230.70:FF:000002">
    <property type="entry name" value="Polyribonucleotide nucleotidyltransferase"/>
    <property type="match status" value="1"/>
</dbReference>
<dbReference type="Gene3D" id="3.30.230.70">
    <property type="entry name" value="GHMP Kinase, N-terminal domain"/>
    <property type="match status" value="2"/>
</dbReference>
<dbReference type="Gene3D" id="3.30.1370.10">
    <property type="entry name" value="K Homology domain, type 1"/>
    <property type="match status" value="1"/>
</dbReference>
<dbReference type="Gene3D" id="2.40.50.140">
    <property type="entry name" value="Nucleic acid-binding proteins"/>
    <property type="match status" value="1"/>
</dbReference>
<dbReference type="HAMAP" id="MF_01595">
    <property type="entry name" value="PNPase"/>
    <property type="match status" value="1"/>
</dbReference>
<dbReference type="InterPro" id="IPR001247">
    <property type="entry name" value="ExoRNase_PH_dom1"/>
</dbReference>
<dbReference type="InterPro" id="IPR015847">
    <property type="entry name" value="ExoRNase_PH_dom2"/>
</dbReference>
<dbReference type="InterPro" id="IPR036345">
    <property type="entry name" value="ExoRNase_PH_dom2_sf"/>
</dbReference>
<dbReference type="InterPro" id="IPR014069">
    <property type="entry name" value="GPSI/PNP"/>
</dbReference>
<dbReference type="InterPro" id="IPR004087">
    <property type="entry name" value="KH_dom"/>
</dbReference>
<dbReference type="InterPro" id="IPR004088">
    <property type="entry name" value="KH_dom_type_1"/>
</dbReference>
<dbReference type="InterPro" id="IPR036612">
    <property type="entry name" value="KH_dom_type_1_sf"/>
</dbReference>
<dbReference type="InterPro" id="IPR012340">
    <property type="entry name" value="NA-bd_OB-fold"/>
</dbReference>
<dbReference type="InterPro" id="IPR012162">
    <property type="entry name" value="PNPase"/>
</dbReference>
<dbReference type="InterPro" id="IPR027408">
    <property type="entry name" value="PNPase/RNase_PH_dom_sf"/>
</dbReference>
<dbReference type="InterPro" id="IPR015848">
    <property type="entry name" value="PNPase_PH_RNA-bd_bac/org-type"/>
</dbReference>
<dbReference type="InterPro" id="IPR036456">
    <property type="entry name" value="PNPase_PH_RNA-bd_sf"/>
</dbReference>
<dbReference type="InterPro" id="IPR020568">
    <property type="entry name" value="Ribosomal_Su5_D2-typ_SF"/>
</dbReference>
<dbReference type="InterPro" id="IPR003029">
    <property type="entry name" value="S1_domain"/>
</dbReference>
<dbReference type="NCBIfam" id="TIGR03591">
    <property type="entry name" value="polynuc_phos"/>
    <property type="match status" value="1"/>
</dbReference>
<dbReference type="NCBIfam" id="TIGR02696">
    <property type="entry name" value="pppGpp_PNP"/>
    <property type="match status" value="1"/>
</dbReference>
<dbReference type="NCBIfam" id="NF008805">
    <property type="entry name" value="PRK11824.1"/>
    <property type="match status" value="1"/>
</dbReference>
<dbReference type="PANTHER" id="PTHR11252">
    <property type="entry name" value="POLYRIBONUCLEOTIDE NUCLEOTIDYLTRANSFERASE"/>
    <property type="match status" value="1"/>
</dbReference>
<dbReference type="PANTHER" id="PTHR11252:SF0">
    <property type="entry name" value="POLYRIBONUCLEOTIDE NUCLEOTIDYLTRANSFERASE 1, MITOCHONDRIAL"/>
    <property type="match status" value="1"/>
</dbReference>
<dbReference type="Pfam" id="PF00013">
    <property type="entry name" value="KH_1"/>
    <property type="match status" value="1"/>
</dbReference>
<dbReference type="Pfam" id="PF03726">
    <property type="entry name" value="PNPase"/>
    <property type="match status" value="1"/>
</dbReference>
<dbReference type="Pfam" id="PF01138">
    <property type="entry name" value="RNase_PH"/>
    <property type="match status" value="2"/>
</dbReference>
<dbReference type="Pfam" id="PF03725">
    <property type="entry name" value="RNase_PH_C"/>
    <property type="match status" value="1"/>
</dbReference>
<dbReference type="Pfam" id="PF00575">
    <property type="entry name" value="S1"/>
    <property type="match status" value="1"/>
</dbReference>
<dbReference type="PIRSF" id="PIRSF005499">
    <property type="entry name" value="PNPase"/>
    <property type="match status" value="1"/>
</dbReference>
<dbReference type="SMART" id="SM00322">
    <property type="entry name" value="KH"/>
    <property type="match status" value="1"/>
</dbReference>
<dbReference type="SMART" id="SM00316">
    <property type="entry name" value="S1"/>
    <property type="match status" value="1"/>
</dbReference>
<dbReference type="SUPFAM" id="SSF54791">
    <property type="entry name" value="Eukaryotic type KH-domain (KH-domain type I)"/>
    <property type="match status" value="1"/>
</dbReference>
<dbReference type="SUPFAM" id="SSF46915">
    <property type="entry name" value="Polynucleotide phosphorylase/guanosine pentaphosphate synthase (PNPase/GPSI), domain 3"/>
    <property type="match status" value="1"/>
</dbReference>
<dbReference type="SUPFAM" id="SSF55666">
    <property type="entry name" value="Ribonuclease PH domain 2-like"/>
    <property type="match status" value="2"/>
</dbReference>
<dbReference type="SUPFAM" id="SSF54211">
    <property type="entry name" value="Ribosomal protein S5 domain 2-like"/>
    <property type="match status" value="2"/>
</dbReference>
<dbReference type="PROSITE" id="PS50084">
    <property type="entry name" value="KH_TYPE_1"/>
    <property type="match status" value="1"/>
</dbReference>
<dbReference type="PROSITE" id="PS50126">
    <property type="entry name" value="S1"/>
    <property type="match status" value="1"/>
</dbReference>
<keyword id="KW-0963">Cytoplasm</keyword>
<keyword id="KW-0460">Magnesium</keyword>
<keyword id="KW-0479">Metal-binding</keyword>
<keyword id="KW-0548">Nucleotidyltransferase</keyword>
<keyword id="KW-1185">Reference proteome</keyword>
<keyword id="KW-0694">RNA-binding</keyword>
<keyword id="KW-0808">Transferase</keyword>
<sequence>MENETHYAEAVIDNGSFGTRTIRFETGRLAKQAAGSAVAYLDDDTMVLSATTASKKPKENLDFFPLTVDVEERMYAAGKIPGSFFRREGRPSEDAILTCRLIDRPLRPSFKKGLRNEIQVVATIMALNPDHLYDVVAINAASASTQLAGLPFSGPIGGVRVALINGQWVAFPTHTELEDAVFDMVVAGRALEDGDVAIMMVEAEATEKTIQLVAGGAEAPTEEVVAAGLDAAKPFIKVLCKAQADLAAKAAKPTGEFPVFLDYQDDVLEALTAAVKSELSQALTIAGKQDREAELDRVKEIAAEKLLPQFEGREKEISAAYRSLTKSLVRERVIKDKVRIDGRGVTDIRTLAAEVEAIPRVHGSALFERGETQILGVTTLNMLRMEQQLDTLSPVTRKRYMHNYNFPPYSVGETGRVGSPKRREIGHGALAERAIVPVLPTREEFPYAIRQVSEALGSNGSTSMGSVCASTMSLLNAGVPLKAPVAGIAMGLISQEINGETHYVALTDILGAEDAFGDMDFKVAGTKEFVTALQLDTKLDGIPASVLAAALKQARDARLHILDVMMEAIDTPDEMSPNAPRIITVKIPVDKIGEVIGPKGKMINQIQEDTGAEITIEDDGTIYIGAQVGSQAEAARATINGIANPTMPEVGERYLGTVVKTTTFGAFVSLLPGKDGLLHISQIRKLAGGKRVENVEDVLGVGAKVQVEIAEIDSRGKLSLIPVVEGEGDDEKKDDTDK</sequence>
<name>PNP_STRAW</name>
<reference key="1">
    <citation type="journal article" date="2003" name="Nat. Biotechnol.">
        <title>Complete genome sequence and comparative analysis of the industrial microorganism Streptomyces avermitilis.</title>
        <authorList>
            <person name="Ikeda H."/>
            <person name="Ishikawa J."/>
            <person name="Hanamoto A."/>
            <person name="Shinose M."/>
            <person name="Kikuchi H."/>
            <person name="Shiba T."/>
            <person name="Sakaki Y."/>
            <person name="Hattori M."/>
            <person name="Omura S."/>
        </authorList>
    </citation>
    <scope>NUCLEOTIDE SEQUENCE [LARGE SCALE GENOMIC DNA]</scope>
    <source>
        <strain>ATCC 31267 / DSM 46492 / JCM 5070 / NBRC 14893 / NCIMB 12804 / NRRL 8165 / MA-4680</strain>
    </source>
</reference>
<reference key="2">
    <citation type="journal article" date="2001" name="Proc. Natl. Acad. Sci. U.S.A.">
        <title>Genome sequence of an industrial microorganism Streptomyces avermitilis: deducing the ability of producing secondary metabolites.</title>
        <authorList>
            <person name="Omura S."/>
            <person name="Ikeda H."/>
            <person name="Ishikawa J."/>
            <person name="Hanamoto A."/>
            <person name="Takahashi C."/>
            <person name="Shinose M."/>
            <person name="Takahashi Y."/>
            <person name="Horikawa H."/>
            <person name="Nakazawa H."/>
            <person name="Osonoe T."/>
            <person name="Kikuchi H."/>
            <person name="Shiba T."/>
            <person name="Sakaki Y."/>
            <person name="Hattori M."/>
        </authorList>
    </citation>
    <scope>NUCLEOTIDE SEQUENCE [LARGE SCALE GENOMIC DNA]</scope>
    <source>
        <strain>ATCC 31267 / DSM 46492 / JCM 5070 / NBRC 14893 / NCIMB 12804 / NRRL 8165 / MA-4680</strain>
    </source>
</reference>
<feature type="chain" id="PRO_0000329888" description="Polyribonucleotide nucleotidyltransferase">
    <location>
        <begin position="1"/>
        <end position="738"/>
    </location>
</feature>
<feature type="domain" description="KH" evidence="1">
    <location>
        <begin position="580"/>
        <end position="639"/>
    </location>
</feature>
<feature type="domain" description="S1 motif" evidence="1">
    <location>
        <begin position="651"/>
        <end position="723"/>
    </location>
</feature>
<feature type="binding site" evidence="1">
    <location>
        <position position="514"/>
    </location>
    <ligand>
        <name>Mg(2+)</name>
        <dbReference type="ChEBI" id="CHEBI:18420"/>
    </ligand>
</feature>
<feature type="binding site" evidence="1">
    <location>
        <position position="520"/>
    </location>
    <ligand>
        <name>Mg(2+)</name>
        <dbReference type="ChEBI" id="CHEBI:18420"/>
    </ligand>
</feature>
<evidence type="ECO:0000255" key="1">
    <source>
        <dbReference type="HAMAP-Rule" id="MF_01595"/>
    </source>
</evidence>
<protein>
    <recommendedName>
        <fullName evidence="1">Polyribonucleotide nucleotidyltransferase</fullName>
        <ecNumber evidence="1">2.7.7.8</ecNumber>
    </recommendedName>
    <alternativeName>
        <fullName evidence="1">Polynucleotide phosphorylase</fullName>
        <shortName evidence="1">PNPase</shortName>
    </alternativeName>
</protein>
<comment type="function">
    <text evidence="1">Involved in mRNA degradation. Catalyzes the phosphorolysis of single-stranded polyribonucleotides processively in the 3'- to 5'-direction.</text>
</comment>
<comment type="catalytic activity">
    <reaction evidence="1">
        <text>RNA(n+1) + phosphate = RNA(n) + a ribonucleoside 5'-diphosphate</text>
        <dbReference type="Rhea" id="RHEA:22096"/>
        <dbReference type="Rhea" id="RHEA-COMP:14527"/>
        <dbReference type="Rhea" id="RHEA-COMP:17342"/>
        <dbReference type="ChEBI" id="CHEBI:43474"/>
        <dbReference type="ChEBI" id="CHEBI:57930"/>
        <dbReference type="ChEBI" id="CHEBI:140395"/>
        <dbReference type="EC" id="2.7.7.8"/>
    </reaction>
</comment>
<comment type="cofactor">
    <cofactor evidence="1">
        <name>Mg(2+)</name>
        <dbReference type="ChEBI" id="CHEBI:18420"/>
    </cofactor>
</comment>
<comment type="subcellular location">
    <subcellularLocation>
        <location evidence="1">Cytoplasm</location>
    </subcellularLocation>
</comment>
<comment type="similarity">
    <text evidence="1">Belongs to the polyribonucleotide nucleotidyltransferase family.</text>
</comment>
<proteinExistence type="inferred from homology"/>